<evidence type="ECO:0000255" key="1">
    <source>
        <dbReference type="PROSITE-ProRule" id="PRU00066"/>
    </source>
</evidence>
<evidence type="ECO:0000256" key="2">
    <source>
        <dbReference type="SAM" id="MobiDB-lite"/>
    </source>
</evidence>
<accession>Q803Q4</accession>
<name>DEP1A_DANRE</name>
<gene>
    <name type="primary">depdc1a</name>
</gene>
<organism>
    <name type="scientific">Danio rerio</name>
    <name type="common">Zebrafish</name>
    <name type="synonym">Brachydanio rerio</name>
    <dbReference type="NCBI Taxonomy" id="7955"/>
    <lineage>
        <taxon>Eukaryota</taxon>
        <taxon>Metazoa</taxon>
        <taxon>Chordata</taxon>
        <taxon>Craniata</taxon>
        <taxon>Vertebrata</taxon>
        <taxon>Euteleostomi</taxon>
        <taxon>Actinopterygii</taxon>
        <taxon>Neopterygii</taxon>
        <taxon>Teleostei</taxon>
        <taxon>Ostariophysi</taxon>
        <taxon>Cypriniformes</taxon>
        <taxon>Danionidae</taxon>
        <taxon>Danioninae</taxon>
        <taxon>Danio</taxon>
    </lineage>
</organism>
<feature type="chain" id="PRO_0000284788" description="DEP domain-containing protein 1A">
    <location>
        <begin position="1"/>
        <end position="800"/>
    </location>
</feature>
<feature type="domain" description="DEP" evidence="1">
    <location>
        <begin position="24"/>
        <end position="108"/>
    </location>
</feature>
<feature type="domain" description="Rho-GAP">
    <location>
        <begin position="281"/>
        <end position="321"/>
    </location>
</feature>
<feature type="region of interest" description="Disordered" evidence="2">
    <location>
        <begin position="147"/>
        <end position="173"/>
    </location>
</feature>
<feature type="region of interest" description="Disordered" evidence="2">
    <location>
        <begin position="306"/>
        <end position="326"/>
    </location>
</feature>
<feature type="region of interest" description="Disordered" evidence="2">
    <location>
        <begin position="459"/>
        <end position="485"/>
    </location>
</feature>
<feature type="compositionally biased region" description="Low complexity" evidence="2">
    <location>
        <begin position="459"/>
        <end position="468"/>
    </location>
</feature>
<protein>
    <recommendedName>
        <fullName>DEP domain-containing protein 1A</fullName>
    </recommendedName>
</protein>
<proteinExistence type="evidence at transcript level"/>
<keyword id="KW-0343">GTPase activation</keyword>
<keyword id="KW-1185">Reference proteome</keyword>
<sequence length="800" mass="90690">MSSHIVTPGPYRATKLWNEVTKLFRAGMPLKKHRQHFRVYTNCFTASTAVDWLHELLKNNSNFGPDVTRQQTVQLLKKFLKNHVIEDVKGRWGMEDLEDNSQLYRFPSTSPLKPIPNRPTVMRRKSLSMMDRESFFKFRGSKKFDKETLENVDPETQESPVGSSSGETERSRELTEDDIHVIWKNVTLTHLQKLVGSASLEGVLDPAKVNPQFIVYNMTKVNKHGVVSLEDKTEDLPHWALSAMKCLANWPKYDSDQPTYLGFERDVFKTVSDYFYSLPQPLLTYQYYELFVNILVMCGYITTPKSQPGKRKNQEEPNCPQPAKNPYVNPANLFRSTEYLLLSLIRKEAIDEADSPMKEVFSSKTETKLDTRRVFRGRRVSDGDRLDGSYLDVSQAHKTDVPYGRLRPRSCSLEGNINNCAKSRLFRSSESLESCSSDKSNPETDSPLEPNLQSSLVSINTSGSSVSSQLSADLRRNNSRPARARPRSIGNLFDIEENREMSASSFSVHAPVAEITMRPDSTSSVGFRGLGLSSLHGSCVDVRTGPSFSRRCQSSLDLSKPAPARPPSALLTHQPEQSLLQPSLEQVAVEALQLCTLLLPPASRRKLQLLLRMISRMSQNVDMPRLHDVIGTRTLLVQTFSRCVLSCEEVDDLDELLATRLLSFLMDHHQEVLQVPVYLRNAVEDHINYLKSLSSCPGSAGPIPSYSFCRQISCQEFEQQKLSVSQSALADLLENIIKDKSMSVKEKKKKIKLFQKEYPDIYSRRFPTTESETQLFADKPKIKPPMLLSIKKAKTFSIRN</sequence>
<reference key="1">
    <citation type="submission" date="2003-01" db="EMBL/GenBank/DDBJ databases">
        <authorList>
            <consortium name="NIH - Zebrafish Gene Collection (ZGC) project"/>
        </authorList>
    </citation>
    <scope>NUCLEOTIDE SEQUENCE [LARGE SCALE MRNA]</scope>
    <source>
        <strain>AB</strain>
        <tissue>Embryo</tissue>
    </source>
</reference>
<dbReference type="EMBL" id="BC044382">
    <property type="protein sequence ID" value="AAH44382.1"/>
    <property type="molecule type" value="mRNA"/>
</dbReference>
<dbReference type="RefSeq" id="NP_942573.1">
    <property type="nucleotide sequence ID" value="NM_198872.1"/>
</dbReference>
<dbReference type="SMR" id="Q803Q4"/>
<dbReference type="FunCoup" id="Q803Q4">
    <property type="interactions" value="914"/>
</dbReference>
<dbReference type="STRING" id="7955.ENSDARP00000049675"/>
<dbReference type="PaxDb" id="7955-ENSDARP00000049675"/>
<dbReference type="GeneID" id="100003959"/>
<dbReference type="KEGG" id="dre:100003959"/>
<dbReference type="AGR" id="ZFIN:ZDB-GENE-030131-9827"/>
<dbReference type="CTD" id="76131"/>
<dbReference type="ZFIN" id="ZDB-GENE-030131-9827">
    <property type="gene designation" value="depdc1a"/>
</dbReference>
<dbReference type="eggNOG" id="ENOG502QR00">
    <property type="taxonomic scope" value="Eukaryota"/>
</dbReference>
<dbReference type="InParanoid" id="Q803Q4"/>
<dbReference type="OrthoDB" id="524326at2759"/>
<dbReference type="PhylomeDB" id="Q803Q4"/>
<dbReference type="PRO" id="PR:Q803Q4"/>
<dbReference type="Proteomes" id="UP000000437">
    <property type="component" value="Alternate scaffold 8"/>
</dbReference>
<dbReference type="Proteomes" id="UP000000437">
    <property type="component" value="Chromosome 8"/>
</dbReference>
<dbReference type="GO" id="GO:0005096">
    <property type="term" value="F:GTPase activator activity"/>
    <property type="evidence" value="ECO:0007669"/>
    <property type="project" value="UniProtKB-KW"/>
</dbReference>
<dbReference type="GO" id="GO:0035556">
    <property type="term" value="P:intracellular signal transduction"/>
    <property type="evidence" value="ECO:0007669"/>
    <property type="project" value="InterPro"/>
</dbReference>
<dbReference type="CDD" id="cd04447">
    <property type="entry name" value="DEP_BRCC3"/>
    <property type="match status" value="1"/>
</dbReference>
<dbReference type="FunFam" id="1.10.10.10:FF:000182">
    <property type="entry name" value="DEP domain-containing protein 1B isoform 1"/>
    <property type="match status" value="1"/>
</dbReference>
<dbReference type="Gene3D" id="1.10.10.10">
    <property type="entry name" value="Winged helix-like DNA-binding domain superfamily/Winged helix DNA-binding domain"/>
    <property type="match status" value="1"/>
</dbReference>
<dbReference type="InterPro" id="IPR000591">
    <property type="entry name" value="DEP_dom"/>
</dbReference>
<dbReference type="InterPro" id="IPR008936">
    <property type="entry name" value="Rho_GTPase_activation_prot"/>
</dbReference>
<dbReference type="InterPro" id="IPR036388">
    <property type="entry name" value="WH-like_DNA-bd_sf"/>
</dbReference>
<dbReference type="InterPro" id="IPR036390">
    <property type="entry name" value="WH_DNA-bd_sf"/>
</dbReference>
<dbReference type="PANTHER" id="PTHR16206">
    <property type="entry name" value="DEP DOMAIN-CONTAINING"/>
    <property type="match status" value="1"/>
</dbReference>
<dbReference type="PANTHER" id="PTHR16206:SF12">
    <property type="entry name" value="DEP DOMAIN-CONTAINING PROTEIN 1A"/>
    <property type="match status" value="1"/>
</dbReference>
<dbReference type="Pfam" id="PF00610">
    <property type="entry name" value="DEP"/>
    <property type="match status" value="1"/>
</dbReference>
<dbReference type="SMART" id="SM00049">
    <property type="entry name" value="DEP"/>
    <property type="match status" value="1"/>
</dbReference>
<dbReference type="SUPFAM" id="SSF48350">
    <property type="entry name" value="GTPase activation domain, GAP"/>
    <property type="match status" value="1"/>
</dbReference>
<dbReference type="SUPFAM" id="SSF46785">
    <property type="entry name" value="Winged helix' DNA-binding domain"/>
    <property type="match status" value="1"/>
</dbReference>
<dbReference type="PROSITE" id="PS50186">
    <property type="entry name" value="DEP"/>
    <property type="match status" value="1"/>
</dbReference>